<sequence length="71" mass="6934">MNLAVIGAGIAVLTGLGAGIGIGIATGRATEAIARQPEAASKIQTALIIGAGLAEATAIYGLIIAFMILTK</sequence>
<keyword id="KW-0066">ATP synthesis</keyword>
<keyword id="KW-1003">Cell membrane</keyword>
<keyword id="KW-0138">CF(0)</keyword>
<keyword id="KW-0375">Hydrogen ion transport</keyword>
<keyword id="KW-0406">Ion transport</keyword>
<keyword id="KW-0446">Lipid-binding</keyword>
<keyword id="KW-0472">Membrane</keyword>
<keyword id="KW-0812">Transmembrane</keyword>
<keyword id="KW-1133">Transmembrane helix</keyword>
<keyword id="KW-0813">Transport</keyword>
<evidence type="ECO:0000255" key="1">
    <source>
        <dbReference type="HAMAP-Rule" id="MF_01396"/>
    </source>
</evidence>
<name>ATPL_CLOBA</name>
<accession>B2UZJ5</accession>
<dbReference type="EMBL" id="CP001078">
    <property type="protein sequence ID" value="ACD51400.1"/>
    <property type="molecule type" value="Genomic_DNA"/>
</dbReference>
<dbReference type="RefSeq" id="WP_003369994.1">
    <property type="nucleotide sequence ID" value="NC_010723.1"/>
</dbReference>
<dbReference type="SMR" id="B2UZJ5"/>
<dbReference type="KEGG" id="cbt:CLH_0485"/>
<dbReference type="HOGENOM" id="CLU_148047_2_1_9"/>
<dbReference type="GO" id="GO:0005886">
    <property type="term" value="C:plasma membrane"/>
    <property type="evidence" value="ECO:0007669"/>
    <property type="project" value="UniProtKB-SubCell"/>
</dbReference>
<dbReference type="GO" id="GO:0045259">
    <property type="term" value="C:proton-transporting ATP synthase complex"/>
    <property type="evidence" value="ECO:0007669"/>
    <property type="project" value="UniProtKB-KW"/>
</dbReference>
<dbReference type="GO" id="GO:0033177">
    <property type="term" value="C:proton-transporting two-sector ATPase complex, proton-transporting domain"/>
    <property type="evidence" value="ECO:0007669"/>
    <property type="project" value="InterPro"/>
</dbReference>
<dbReference type="GO" id="GO:0008289">
    <property type="term" value="F:lipid binding"/>
    <property type="evidence" value="ECO:0007669"/>
    <property type="project" value="UniProtKB-KW"/>
</dbReference>
<dbReference type="GO" id="GO:0046933">
    <property type="term" value="F:proton-transporting ATP synthase activity, rotational mechanism"/>
    <property type="evidence" value="ECO:0007669"/>
    <property type="project" value="UniProtKB-UniRule"/>
</dbReference>
<dbReference type="FunFam" id="1.20.20.10:FF:000004">
    <property type="entry name" value="ATP synthase subunit c"/>
    <property type="match status" value="1"/>
</dbReference>
<dbReference type="Gene3D" id="1.20.20.10">
    <property type="entry name" value="F1F0 ATP synthase subunit C"/>
    <property type="match status" value="1"/>
</dbReference>
<dbReference type="HAMAP" id="MF_01396">
    <property type="entry name" value="ATP_synth_c_bact"/>
    <property type="match status" value="1"/>
</dbReference>
<dbReference type="InterPro" id="IPR005953">
    <property type="entry name" value="ATP_synth_csu_bac/chlpt"/>
</dbReference>
<dbReference type="InterPro" id="IPR000454">
    <property type="entry name" value="ATP_synth_F0_csu"/>
</dbReference>
<dbReference type="InterPro" id="IPR020537">
    <property type="entry name" value="ATP_synth_F0_csu_DDCD_BS"/>
</dbReference>
<dbReference type="InterPro" id="IPR038662">
    <property type="entry name" value="ATP_synth_F0_csu_sf"/>
</dbReference>
<dbReference type="InterPro" id="IPR002379">
    <property type="entry name" value="ATPase_proteolipid_c-like_dom"/>
</dbReference>
<dbReference type="InterPro" id="IPR035921">
    <property type="entry name" value="F/V-ATP_Csub_sf"/>
</dbReference>
<dbReference type="NCBIfam" id="TIGR01260">
    <property type="entry name" value="ATP_synt_c"/>
    <property type="match status" value="1"/>
</dbReference>
<dbReference type="PANTHER" id="PTHR10031">
    <property type="entry name" value="ATP SYNTHASE LIPID-BINDING PROTEIN, MITOCHONDRIAL"/>
    <property type="match status" value="1"/>
</dbReference>
<dbReference type="PANTHER" id="PTHR10031:SF0">
    <property type="entry name" value="ATPASE PROTEIN 9"/>
    <property type="match status" value="1"/>
</dbReference>
<dbReference type="Pfam" id="PF00137">
    <property type="entry name" value="ATP-synt_C"/>
    <property type="match status" value="1"/>
</dbReference>
<dbReference type="PRINTS" id="PR00124">
    <property type="entry name" value="ATPASEC"/>
</dbReference>
<dbReference type="SUPFAM" id="SSF81333">
    <property type="entry name" value="F1F0 ATP synthase subunit C"/>
    <property type="match status" value="1"/>
</dbReference>
<dbReference type="PROSITE" id="PS00605">
    <property type="entry name" value="ATPASE_C"/>
    <property type="match status" value="1"/>
</dbReference>
<feature type="chain" id="PRO_0000365865" description="ATP synthase subunit c">
    <location>
        <begin position="1"/>
        <end position="71"/>
    </location>
</feature>
<feature type="transmembrane region" description="Helical" evidence="1">
    <location>
        <begin position="4"/>
        <end position="24"/>
    </location>
</feature>
<feature type="transmembrane region" description="Helical" evidence="1">
    <location>
        <begin position="48"/>
        <end position="68"/>
    </location>
</feature>
<feature type="site" description="Reversibly protonated during proton transport" evidence="1">
    <location>
        <position position="55"/>
    </location>
</feature>
<organism>
    <name type="scientific">Clostridium botulinum (strain Alaska E43 / Type E3)</name>
    <dbReference type="NCBI Taxonomy" id="508767"/>
    <lineage>
        <taxon>Bacteria</taxon>
        <taxon>Bacillati</taxon>
        <taxon>Bacillota</taxon>
        <taxon>Clostridia</taxon>
        <taxon>Eubacteriales</taxon>
        <taxon>Clostridiaceae</taxon>
        <taxon>Clostridium</taxon>
    </lineage>
</organism>
<reference key="1">
    <citation type="submission" date="2008-05" db="EMBL/GenBank/DDBJ databases">
        <title>Complete genome sequence of Clostridium botulinum E3 str. Alaska E43.</title>
        <authorList>
            <person name="Brinkac L.M."/>
            <person name="Brown J.L."/>
            <person name="Bruce D."/>
            <person name="Detter C."/>
            <person name="Munk C."/>
            <person name="Smith L.A."/>
            <person name="Smith T.J."/>
            <person name="Sutton G."/>
            <person name="Brettin T.S."/>
        </authorList>
    </citation>
    <scope>NUCLEOTIDE SEQUENCE [LARGE SCALE GENOMIC DNA]</scope>
    <source>
        <strain>Alaska E43 / Type E3</strain>
    </source>
</reference>
<gene>
    <name evidence="1" type="primary">atpE</name>
    <name type="ordered locus">CLH_0485</name>
</gene>
<comment type="function">
    <text evidence="1">F(1)F(0) ATP synthase produces ATP from ADP in the presence of a proton or sodium gradient. F-type ATPases consist of two structural domains, F(1) containing the extramembraneous catalytic core and F(0) containing the membrane proton channel, linked together by a central stalk and a peripheral stalk. During catalysis, ATP synthesis in the catalytic domain of F(1) is coupled via a rotary mechanism of the central stalk subunits to proton translocation.</text>
</comment>
<comment type="function">
    <text evidence="1">Key component of the F(0) channel; it plays a direct role in translocation across the membrane. A homomeric c-ring of between 10-14 subunits forms the central stalk rotor element with the F(1) delta and epsilon subunits.</text>
</comment>
<comment type="subunit">
    <text evidence="1">F-type ATPases have 2 components, F(1) - the catalytic core - and F(0) - the membrane proton channel. F(1) has five subunits: alpha(3), beta(3), gamma(1), delta(1), epsilon(1). F(0) has three main subunits: a(1), b(2) and c(10-14). The alpha and beta chains form an alternating ring which encloses part of the gamma chain. F(1) is attached to F(0) by a central stalk formed by the gamma and epsilon chains, while a peripheral stalk is formed by the delta and b chains.</text>
</comment>
<comment type="subcellular location">
    <subcellularLocation>
        <location evidence="1">Cell membrane</location>
        <topology evidence="1">Multi-pass membrane protein</topology>
    </subcellularLocation>
</comment>
<comment type="similarity">
    <text evidence="1">Belongs to the ATPase C chain family.</text>
</comment>
<proteinExistence type="inferred from homology"/>
<protein>
    <recommendedName>
        <fullName evidence="1">ATP synthase subunit c</fullName>
    </recommendedName>
    <alternativeName>
        <fullName evidence="1">ATP synthase F(0) sector subunit c</fullName>
    </alternativeName>
    <alternativeName>
        <fullName evidence="1">F-type ATPase subunit c</fullName>
        <shortName evidence="1">F-ATPase subunit c</shortName>
    </alternativeName>
    <alternativeName>
        <fullName evidence="1">Lipid-binding protein</fullName>
    </alternativeName>
</protein>